<accession>Q8XRG1</accession>
<dbReference type="EC" id="5.3.2.-"/>
<dbReference type="EMBL" id="AL646053">
    <property type="protein sequence ID" value="CAD18044.1"/>
    <property type="molecule type" value="Genomic_DNA"/>
</dbReference>
<dbReference type="RefSeq" id="WP_011004190.1">
    <property type="nucleotide sequence ID" value="NC_003296.1"/>
</dbReference>
<dbReference type="SMR" id="Q8XRG1"/>
<dbReference type="STRING" id="267608.RSp0893"/>
<dbReference type="EnsemblBacteria" id="CAD18044">
    <property type="protein sequence ID" value="CAD18044"/>
    <property type="gene ID" value="RSp0893"/>
</dbReference>
<dbReference type="KEGG" id="rso:RSp0893"/>
<dbReference type="eggNOG" id="COG1942">
    <property type="taxonomic scope" value="Bacteria"/>
</dbReference>
<dbReference type="HOGENOM" id="CLU_148073_5_2_4"/>
<dbReference type="Proteomes" id="UP000001436">
    <property type="component" value="Plasmid megaplasmid Rsp"/>
</dbReference>
<dbReference type="GO" id="GO:0016853">
    <property type="term" value="F:isomerase activity"/>
    <property type="evidence" value="ECO:0007669"/>
    <property type="project" value="UniProtKB-KW"/>
</dbReference>
<dbReference type="Gene3D" id="3.30.429.10">
    <property type="entry name" value="Macrophage Migration Inhibitory Factor"/>
    <property type="match status" value="1"/>
</dbReference>
<dbReference type="InterPro" id="IPR018191">
    <property type="entry name" value="4-OT"/>
</dbReference>
<dbReference type="InterPro" id="IPR004370">
    <property type="entry name" value="4-OT-like_dom"/>
</dbReference>
<dbReference type="InterPro" id="IPR014347">
    <property type="entry name" value="Tautomerase/MIF_sf"/>
</dbReference>
<dbReference type="NCBIfam" id="NF002524">
    <property type="entry name" value="PRK01964.1"/>
    <property type="match status" value="1"/>
</dbReference>
<dbReference type="NCBIfam" id="NF002571">
    <property type="entry name" value="PRK02220.1"/>
    <property type="match status" value="1"/>
</dbReference>
<dbReference type="NCBIfam" id="TIGR00013">
    <property type="entry name" value="taut"/>
    <property type="match status" value="1"/>
</dbReference>
<dbReference type="PANTHER" id="PTHR35530:SF1">
    <property type="entry name" value="2-HYDROXYMUCONATE TAUTOMERASE"/>
    <property type="match status" value="1"/>
</dbReference>
<dbReference type="PANTHER" id="PTHR35530">
    <property type="entry name" value="TAUTOMERASE-RELATED"/>
    <property type="match status" value="1"/>
</dbReference>
<dbReference type="Pfam" id="PF01361">
    <property type="entry name" value="Tautomerase"/>
    <property type="match status" value="1"/>
</dbReference>
<dbReference type="SUPFAM" id="SSF55331">
    <property type="entry name" value="Tautomerase/MIF"/>
    <property type="match status" value="1"/>
</dbReference>
<reference key="1">
    <citation type="journal article" date="2002" name="Nature">
        <title>Genome sequence of the plant pathogen Ralstonia solanacearum.</title>
        <authorList>
            <person name="Salanoubat M."/>
            <person name="Genin S."/>
            <person name="Artiguenave F."/>
            <person name="Gouzy J."/>
            <person name="Mangenot S."/>
            <person name="Arlat M."/>
            <person name="Billault A."/>
            <person name="Brottier P."/>
            <person name="Camus J.-C."/>
            <person name="Cattolico L."/>
            <person name="Chandler M."/>
            <person name="Choisne N."/>
            <person name="Claudel-Renard C."/>
            <person name="Cunnac S."/>
            <person name="Demange N."/>
            <person name="Gaspin C."/>
            <person name="Lavie M."/>
            <person name="Moisan A."/>
            <person name="Robert C."/>
            <person name="Saurin W."/>
            <person name="Schiex T."/>
            <person name="Siguier P."/>
            <person name="Thebault P."/>
            <person name="Whalen M."/>
            <person name="Wincker P."/>
            <person name="Levy M."/>
            <person name="Weissenbach J."/>
            <person name="Boucher C.A."/>
        </authorList>
    </citation>
    <scope>NUCLEOTIDE SEQUENCE [LARGE SCALE GENOMIC DNA]</scope>
    <source>
        <strain>ATCC BAA-1114 / GMI1000</strain>
    </source>
</reference>
<name>Y4393_RALN1</name>
<comment type="similarity">
    <text evidence="2">Belongs to the 4-oxalocrotonate tautomerase family.</text>
</comment>
<evidence type="ECO:0000250" key="1"/>
<evidence type="ECO:0000305" key="2"/>
<proteinExistence type="inferred from homology"/>
<protein>
    <recommendedName>
        <fullName>Probable tautomerase RSp0893</fullName>
        <ecNumber>5.3.2.-</ecNumber>
    </recommendedName>
</protein>
<feature type="initiator methionine" description="Removed" evidence="1">
    <location>
        <position position="1"/>
    </location>
</feature>
<feature type="chain" id="PRO_0000209538" description="Probable tautomerase RSp0893">
    <location>
        <begin position="2"/>
        <end position="70"/>
    </location>
</feature>
<feature type="active site" description="Proton acceptor; via imino nitrogen" evidence="1">
    <location>
        <position position="2"/>
    </location>
</feature>
<sequence>MPLIQVTLIEGRTMEAKAALIGSLTQAAVATLGAPRESVRVIIQEVPAAHWGVAGVPKSAAKEPPRDSKA</sequence>
<gene>
    <name type="ordered locus">RSp0893</name>
    <name type="ORF">RS01664</name>
</gene>
<keyword id="KW-0413">Isomerase</keyword>
<keyword id="KW-0614">Plasmid</keyword>
<keyword id="KW-1185">Reference proteome</keyword>
<organism>
    <name type="scientific">Ralstonia nicotianae (strain ATCC BAA-1114 / GMI1000)</name>
    <name type="common">Ralstonia solanacearum</name>
    <dbReference type="NCBI Taxonomy" id="267608"/>
    <lineage>
        <taxon>Bacteria</taxon>
        <taxon>Pseudomonadati</taxon>
        <taxon>Pseudomonadota</taxon>
        <taxon>Betaproteobacteria</taxon>
        <taxon>Burkholderiales</taxon>
        <taxon>Burkholderiaceae</taxon>
        <taxon>Ralstonia</taxon>
        <taxon>Ralstonia solanacearum species complex</taxon>
    </lineage>
</organism>
<geneLocation type="plasmid">
    <name>megaplasmid Rsp</name>
</geneLocation>